<organism>
    <name type="scientific">Arabidopsis thaliana</name>
    <name type="common">Mouse-ear cress</name>
    <dbReference type="NCBI Taxonomy" id="3702"/>
    <lineage>
        <taxon>Eukaryota</taxon>
        <taxon>Viridiplantae</taxon>
        <taxon>Streptophyta</taxon>
        <taxon>Embryophyta</taxon>
        <taxon>Tracheophyta</taxon>
        <taxon>Spermatophyta</taxon>
        <taxon>Magnoliopsida</taxon>
        <taxon>eudicotyledons</taxon>
        <taxon>Gunneridae</taxon>
        <taxon>Pentapetalae</taxon>
        <taxon>rosids</taxon>
        <taxon>malvids</taxon>
        <taxon>Brassicales</taxon>
        <taxon>Brassicaceae</taxon>
        <taxon>Camelineae</taxon>
        <taxon>Arabidopsis</taxon>
    </lineage>
</organism>
<keyword id="KW-0052">Apoplast</keyword>
<keyword id="KW-0186">Copper</keyword>
<keyword id="KW-0325">Glycoprotein</keyword>
<keyword id="KW-0439">Lignin degradation</keyword>
<keyword id="KW-0479">Metal-binding</keyword>
<keyword id="KW-0560">Oxidoreductase</keyword>
<keyword id="KW-1185">Reference proteome</keyword>
<keyword id="KW-0677">Repeat</keyword>
<keyword id="KW-0964">Secreted</keyword>
<keyword id="KW-0732">Signal</keyword>
<name>LAC14_ARATH</name>
<gene>
    <name type="primary">LAC14</name>
    <name type="ordered locus">At5g09360</name>
    <name type="ORF">T5E8.160</name>
</gene>
<proteinExistence type="evidence at transcript level"/>
<feature type="signal peptide" evidence="2">
    <location>
        <begin position="1"/>
        <end position="33"/>
    </location>
</feature>
<feature type="chain" id="PRO_0000283642" description="Laccase-14">
    <location>
        <begin position="34"/>
        <end position="569"/>
    </location>
</feature>
<feature type="domain" description="Plastocyanin-like 1">
    <location>
        <begin position="41"/>
        <end position="157"/>
    </location>
</feature>
<feature type="domain" description="Plastocyanin-like 2">
    <location>
        <begin position="167"/>
        <end position="320"/>
    </location>
</feature>
<feature type="domain" description="Plastocyanin-like 3">
    <location>
        <begin position="420"/>
        <end position="553"/>
    </location>
</feature>
<feature type="binding site" description="type 2 copper site" evidence="1">
    <location>
        <position position="91"/>
    </location>
    <ligand>
        <name>Cu cation</name>
        <dbReference type="ChEBI" id="CHEBI:23378"/>
        <label>1</label>
    </ligand>
</feature>
<feature type="binding site" description="type 3 copper site" evidence="1">
    <location>
        <position position="93"/>
    </location>
    <ligand>
        <name>Cu cation</name>
        <dbReference type="ChEBI" id="CHEBI:23378"/>
        <label>2</label>
    </ligand>
</feature>
<feature type="binding site" description="type 3 copper site" evidence="1">
    <location>
        <position position="136"/>
    </location>
    <ligand>
        <name>Cu cation</name>
        <dbReference type="ChEBI" id="CHEBI:23378"/>
        <label>2</label>
    </ligand>
</feature>
<feature type="binding site" description="type 3 copper site" evidence="1">
    <location>
        <position position="138"/>
    </location>
    <ligand>
        <name>Cu cation</name>
        <dbReference type="ChEBI" id="CHEBI:23378"/>
        <label>3</label>
    </ligand>
</feature>
<feature type="binding site" description="type 1 copper site" evidence="1">
    <location>
        <position position="470"/>
    </location>
    <ligand>
        <name>Cu cation</name>
        <dbReference type="ChEBI" id="CHEBI:23378"/>
        <label>4</label>
    </ligand>
</feature>
<feature type="binding site" description="type 2 copper site" evidence="1">
    <location>
        <position position="473"/>
    </location>
    <ligand>
        <name>Cu cation</name>
        <dbReference type="ChEBI" id="CHEBI:23378"/>
        <label>1</label>
    </ligand>
</feature>
<feature type="binding site" description="type 3 copper site" evidence="1">
    <location>
        <position position="475"/>
    </location>
    <ligand>
        <name>Cu cation</name>
        <dbReference type="ChEBI" id="CHEBI:23378"/>
        <label>3</label>
    </ligand>
</feature>
<feature type="binding site" description="type 3 copper site" evidence="1">
    <location>
        <position position="532"/>
    </location>
    <ligand>
        <name>Cu cation</name>
        <dbReference type="ChEBI" id="CHEBI:23378"/>
        <label>3</label>
    </ligand>
</feature>
<feature type="binding site" description="type 1 copper site" evidence="1">
    <location>
        <position position="533"/>
    </location>
    <ligand>
        <name>Cu cation</name>
        <dbReference type="ChEBI" id="CHEBI:23378"/>
        <label>4</label>
    </ligand>
</feature>
<feature type="binding site" description="type 3 copper site" evidence="1">
    <location>
        <position position="534"/>
    </location>
    <ligand>
        <name>Cu cation</name>
        <dbReference type="ChEBI" id="CHEBI:23378"/>
        <label>2</label>
    </ligand>
</feature>
<feature type="binding site" description="type 1 copper site" evidence="1">
    <location>
        <position position="538"/>
    </location>
    <ligand>
        <name>Cu cation</name>
        <dbReference type="ChEBI" id="CHEBI:23378"/>
        <label>4</label>
    </ligand>
</feature>
<feature type="binding site" description="type 1 copper site" evidence="1">
    <location>
        <position position="543"/>
    </location>
    <ligand>
        <name>Cu cation</name>
        <dbReference type="ChEBI" id="CHEBI:23378"/>
        <label>4</label>
    </ligand>
</feature>
<feature type="glycosylation site" description="N-linked (GlcNAc...) asparagine" evidence="2">
    <location>
        <position position="87"/>
    </location>
</feature>
<feature type="glycosylation site" description="N-linked (GlcNAc...) asparagine" evidence="2">
    <location>
        <position position="190"/>
    </location>
</feature>
<feature type="glycosylation site" description="N-linked (GlcNAc...) asparagine" evidence="2">
    <location>
        <position position="249"/>
    </location>
</feature>
<feature type="glycosylation site" description="N-linked (GlcNAc...) asparagine" evidence="2">
    <location>
        <position position="336"/>
    </location>
</feature>
<feature type="glycosylation site" description="N-linked (GlcNAc...) asparagine" evidence="2">
    <location>
        <position position="374"/>
    </location>
</feature>
<feature type="glycosylation site" description="N-linked (GlcNAc...) asparagine" evidence="2">
    <location>
        <position position="395"/>
    </location>
</feature>
<feature type="glycosylation site" description="N-linked (GlcNAc...) asparagine" evidence="2">
    <location>
        <position position="430"/>
    </location>
</feature>
<feature type="glycosylation site" description="N-linked (GlcNAc...) asparagine" evidence="2">
    <location>
        <position position="452"/>
    </location>
</feature>
<feature type="sequence conflict" description="In Ref. 3; ABE66147." evidence="4" ref="3">
    <original>TVWASNI</original>
    <variation>NVLASDN</variation>
    <location>
        <begin position="463"/>
        <end position="469"/>
    </location>
</feature>
<dbReference type="EC" id="1.10.3.2"/>
<dbReference type="EMBL" id="AL391712">
    <property type="protein sequence ID" value="CAC05462.1"/>
    <property type="molecule type" value="Genomic_DNA"/>
</dbReference>
<dbReference type="EMBL" id="CP002688">
    <property type="protein sequence ID" value="AED91381.1"/>
    <property type="molecule type" value="Genomic_DNA"/>
</dbReference>
<dbReference type="EMBL" id="DQ446936">
    <property type="protein sequence ID" value="ABE66147.1"/>
    <property type="molecule type" value="mRNA"/>
</dbReference>
<dbReference type="RefSeq" id="NP_196498.1">
    <property type="nucleotide sequence ID" value="NM_120972.1"/>
</dbReference>
<dbReference type="SMR" id="Q9FY79"/>
<dbReference type="STRING" id="3702.Q9FY79"/>
<dbReference type="GlyCosmos" id="Q9FY79">
    <property type="glycosylation" value="8 sites, No reported glycans"/>
</dbReference>
<dbReference type="GlyGen" id="Q9FY79">
    <property type="glycosylation" value="8 sites"/>
</dbReference>
<dbReference type="PaxDb" id="3702-AT5G09360.1"/>
<dbReference type="ProteomicsDB" id="237123"/>
<dbReference type="EnsemblPlants" id="AT5G09360.1">
    <property type="protein sequence ID" value="AT5G09360.1"/>
    <property type="gene ID" value="AT5G09360"/>
</dbReference>
<dbReference type="GeneID" id="830795"/>
<dbReference type="Gramene" id="AT5G09360.1">
    <property type="protein sequence ID" value="AT5G09360.1"/>
    <property type="gene ID" value="AT5G09360"/>
</dbReference>
<dbReference type="KEGG" id="ath:AT5G09360"/>
<dbReference type="Araport" id="AT5G09360"/>
<dbReference type="TAIR" id="AT5G09360">
    <property type="gene designation" value="LAC14"/>
</dbReference>
<dbReference type="eggNOG" id="KOG1263">
    <property type="taxonomic scope" value="Eukaryota"/>
</dbReference>
<dbReference type="HOGENOM" id="CLU_006504_6_3_1"/>
<dbReference type="InParanoid" id="Q9FY79"/>
<dbReference type="OMA" id="EAKIHRH"/>
<dbReference type="PhylomeDB" id="Q9FY79"/>
<dbReference type="BioCyc" id="ARA:AT5G09360-MONOMER"/>
<dbReference type="PRO" id="PR:Q9FY79"/>
<dbReference type="Proteomes" id="UP000006548">
    <property type="component" value="Chromosome 5"/>
</dbReference>
<dbReference type="ExpressionAtlas" id="Q9FY79">
    <property type="expression patterns" value="baseline and differential"/>
</dbReference>
<dbReference type="GO" id="GO:0048046">
    <property type="term" value="C:apoplast"/>
    <property type="evidence" value="ECO:0007669"/>
    <property type="project" value="UniProtKB-SubCell"/>
</dbReference>
<dbReference type="GO" id="GO:0005507">
    <property type="term" value="F:copper ion binding"/>
    <property type="evidence" value="ECO:0007669"/>
    <property type="project" value="InterPro"/>
</dbReference>
<dbReference type="GO" id="GO:0052716">
    <property type="term" value="F:hydroquinone:oxygen oxidoreductase activity"/>
    <property type="evidence" value="ECO:0007669"/>
    <property type="project" value="UniProtKB-EC"/>
</dbReference>
<dbReference type="GO" id="GO:0046274">
    <property type="term" value="P:lignin catabolic process"/>
    <property type="evidence" value="ECO:0007669"/>
    <property type="project" value="UniProtKB-KW"/>
</dbReference>
<dbReference type="CDD" id="cd13849">
    <property type="entry name" value="CuRO_1_LCC_plant"/>
    <property type="match status" value="1"/>
</dbReference>
<dbReference type="CDD" id="cd13875">
    <property type="entry name" value="CuRO_2_LCC_plant"/>
    <property type="match status" value="1"/>
</dbReference>
<dbReference type="CDD" id="cd13897">
    <property type="entry name" value="CuRO_3_LCC_plant"/>
    <property type="match status" value="1"/>
</dbReference>
<dbReference type="Gene3D" id="2.60.40.420">
    <property type="entry name" value="Cupredoxins - blue copper proteins"/>
    <property type="match status" value="3"/>
</dbReference>
<dbReference type="InterPro" id="IPR011707">
    <property type="entry name" value="Cu-oxidase-like_N"/>
</dbReference>
<dbReference type="InterPro" id="IPR001117">
    <property type="entry name" value="Cu-oxidase_2nd"/>
</dbReference>
<dbReference type="InterPro" id="IPR011706">
    <property type="entry name" value="Cu-oxidase_C"/>
</dbReference>
<dbReference type="InterPro" id="IPR045087">
    <property type="entry name" value="Cu-oxidase_fam"/>
</dbReference>
<dbReference type="InterPro" id="IPR033138">
    <property type="entry name" value="Cu_oxidase_CS"/>
</dbReference>
<dbReference type="InterPro" id="IPR002355">
    <property type="entry name" value="Cu_oxidase_Cu_BS"/>
</dbReference>
<dbReference type="InterPro" id="IPR008972">
    <property type="entry name" value="Cupredoxin"/>
</dbReference>
<dbReference type="InterPro" id="IPR034288">
    <property type="entry name" value="CuRO_1_LCC"/>
</dbReference>
<dbReference type="InterPro" id="IPR034285">
    <property type="entry name" value="CuRO_2_LCC"/>
</dbReference>
<dbReference type="InterPro" id="IPR034289">
    <property type="entry name" value="CuRO_3_LCC"/>
</dbReference>
<dbReference type="InterPro" id="IPR017761">
    <property type="entry name" value="Laccase"/>
</dbReference>
<dbReference type="NCBIfam" id="TIGR03389">
    <property type="entry name" value="laccase"/>
    <property type="match status" value="1"/>
</dbReference>
<dbReference type="PANTHER" id="PTHR11709:SF262">
    <property type="entry name" value="LACCASE-14"/>
    <property type="match status" value="1"/>
</dbReference>
<dbReference type="PANTHER" id="PTHR11709">
    <property type="entry name" value="MULTI-COPPER OXIDASE"/>
    <property type="match status" value="1"/>
</dbReference>
<dbReference type="Pfam" id="PF00394">
    <property type="entry name" value="Cu-oxidase"/>
    <property type="match status" value="1"/>
</dbReference>
<dbReference type="Pfam" id="PF07731">
    <property type="entry name" value="Cu-oxidase_2"/>
    <property type="match status" value="1"/>
</dbReference>
<dbReference type="Pfam" id="PF07732">
    <property type="entry name" value="Cu-oxidase_3"/>
    <property type="match status" value="1"/>
</dbReference>
<dbReference type="SUPFAM" id="SSF49503">
    <property type="entry name" value="Cupredoxins"/>
    <property type="match status" value="3"/>
</dbReference>
<dbReference type="PROSITE" id="PS00079">
    <property type="entry name" value="MULTICOPPER_OXIDASE1"/>
    <property type="match status" value="1"/>
</dbReference>
<dbReference type="PROSITE" id="PS00080">
    <property type="entry name" value="MULTICOPPER_OXIDASE2"/>
    <property type="match status" value="1"/>
</dbReference>
<sequence>MEFKLNIPNTIIKTLQTIVFFLFVLLAFQIAEAEIHHHTFKIKSKAYTRLCNTNKILTVNGEFPGPTLKAYRGDKLIVNVINNANYNITLHWHGARQIRNPWSDGPEYVTQCPIRPGESYVYRIDLKVEEGTIWWHAHSQWARATVHGAFIVYPKRGSSYPFPKPHREIPLILGEWWKKENIMHIPGKANKTGGEPAISDSYTINGQPGYLYPCSKPETFKITVVRGRRYLLRIINAVMDEELFFAIANHTLTVVAKDGFYLKHFKSDYLMITPGQSMDVLLHANQRPNHYFVAARAYSSAFGAGFDKTTTTAILQYKGDTLNRIKPILPYLPPYNRTEASTRFTNQFRSQRPVNVPVKINTRLLYAISVNLMNCSDDRPCTGPFGKRFSSSINNISFVNPSVDILRAYYRHIGGVFQEDFPRNPPTKFNYTGENLPFPTRFGTKVVVLDYNSSVELILQGTTVWASNIHPIHLHGYNFYVVGSGFGNFDRRKDPLRYNLVDPPEETTVGVPRNGWTAVRFVANNPGVWLLHCHIERHATWGMNTVFIVKDGPTKSSRMVKPPPDLPSC</sequence>
<evidence type="ECO:0000250" key="1"/>
<evidence type="ECO:0000255" key="2"/>
<evidence type="ECO:0000269" key="3">
    <source>
    </source>
</evidence>
<evidence type="ECO:0000305" key="4"/>
<accession>Q9FY79</accession>
<accession>Q1PDY2</accession>
<reference key="1">
    <citation type="journal article" date="2000" name="Nature">
        <title>Sequence and analysis of chromosome 5 of the plant Arabidopsis thaliana.</title>
        <authorList>
            <person name="Tabata S."/>
            <person name="Kaneko T."/>
            <person name="Nakamura Y."/>
            <person name="Kotani H."/>
            <person name="Kato T."/>
            <person name="Asamizu E."/>
            <person name="Miyajima N."/>
            <person name="Sasamoto S."/>
            <person name="Kimura T."/>
            <person name="Hosouchi T."/>
            <person name="Kawashima K."/>
            <person name="Kohara M."/>
            <person name="Matsumoto M."/>
            <person name="Matsuno A."/>
            <person name="Muraki A."/>
            <person name="Nakayama S."/>
            <person name="Nakazaki N."/>
            <person name="Naruo K."/>
            <person name="Okumura S."/>
            <person name="Shinpo S."/>
            <person name="Takeuchi C."/>
            <person name="Wada T."/>
            <person name="Watanabe A."/>
            <person name="Yamada M."/>
            <person name="Yasuda M."/>
            <person name="Sato S."/>
            <person name="de la Bastide M."/>
            <person name="Huang E."/>
            <person name="Spiegel L."/>
            <person name="Gnoj L."/>
            <person name="O'Shaughnessy A."/>
            <person name="Preston R."/>
            <person name="Habermann K."/>
            <person name="Murray J."/>
            <person name="Johnson D."/>
            <person name="Rohlfing T."/>
            <person name="Nelson J."/>
            <person name="Stoneking T."/>
            <person name="Pepin K."/>
            <person name="Spieth J."/>
            <person name="Sekhon M."/>
            <person name="Armstrong J."/>
            <person name="Becker M."/>
            <person name="Belter E."/>
            <person name="Cordum H."/>
            <person name="Cordes M."/>
            <person name="Courtney L."/>
            <person name="Courtney W."/>
            <person name="Dante M."/>
            <person name="Du H."/>
            <person name="Edwards J."/>
            <person name="Fryman J."/>
            <person name="Haakensen B."/>
            <person name="Lamar E."/>
            <person name="Latreille P."/>
            <person name="Leonard S."/>
            <person name="Meyer R."/>
            <person name="Mulvaney E."/>
            <person name="Ozersky P."/>
            <person name="Riley A."/>
            <person name="Strowmatt C."/>
            <person name="Wagner-McPherson C."/>
            <person name="Wollam A."/>
            <person name="Yoakum M."/>
            <person name="Bell M."/>
            <person name="Dedhia N."/>
            <person name="Parnell L."/>
            <person name="Shah R."/>
            <person name="Rodriguez M."/>
            <person name="Hoon See L."/>
            <person name="Vil D."/>
            <person name="Baker J."/>
            <person name="Kirchoff K."/>
            <person name="Toth K."/>
            <person name="King L."/>
            <person name="Bahret A."/>
            <person name="Miller B."/>
            <person name="Marra M.A."/>
            <person name="Martienssen R."/>
            <person name="McCombie W.R."/>
            <person name="Wilson R.K."/>
            <person name="Murphy G."/>
            <person name="Bancroft I."/>
            <person name="Volckaert G."/>
            <person name="Wambutt R."/>
            <person name="Duesterhoeft A."/>
            <person name="Stiekema W."/>
            <person name="Pohl T."/>
            <person name="Entian K.-D."/>
            <person name="Terryn N."/>
            <person name="Hartley N."/>
            <person name="Bent E."/>
            <person name="Johnson S."/>
            <person name="Langham S.-A."/>
            <person name="McCullagh B."/>
            <person name="Robben J."/>
            <person name="Grymonprez B."/>
            <person name="Zimmermann W."/>
            <person name="Ramsperger U."/>
            <person name="Wedler H."/>
            <person name="Balke K."/>
            <person name="Wedler E."/>
            <person name="Peters S."/>
            <person name="van Staveren M."/>
            <person name="Dirkse W."/>
            <person name="Mooijman P."/>
            <person name="Klein Lankhorst R."/>
            <person name="Weitzenegger T."/>
            <person name="Bothe G."/>
            <person name="Rose M."/>
            <person name="Hauf J."/>
            <person name="Berneiser S."/>
            <person name="Hempel S."/>
            <person name="Feldpausch M."/>
            <person name="Lamberth S."/>
            <person name="Villarroel R."/>
            <person name="Gielen J."/>
            <person name="Ardiles W."/>
            <person name="Bents O."/>
            <person name="Lemcke K."/>
            <person name="Kolesov G."/>
            <person name="Mayer K.F.X."/>
            <person name="Rudd S."/>
            <person name="Schoof H."/>
            <person name="Schueller C."/>
            <person name="Zaccaria P."/>
            <person name="Mewes H.-W."/>
            <person name="Bevan M."/>
            <person name="Fransz P.F."/>
        </authorList>
    </citation>
    <scope>NUCLEOTIDE SEQUENCE [LARGE SCALE GENOMIC DNA]</scope>
    <source>
        <strain>cv. Columbia</strain>
    </source>
</reference>
<reference key="2">
    <citation type="journal article" date="2017" name="Plant J.">
        <title>Araport11: a complete reannotation of the Arabidopsis thaliana reference genome.</title>
        <authorList>
            <person name="Cheng C.Y."/>
            <person name="Krishnakumar V."/>
            <person name="Chan A.P."/>
            <person name="Thibaud-Nissen F."/>
            <person name="Schobel S."/>
            <person name="Town C.D."/>
        </authorList>
    </citation>
    <scope>GENOME REANNOTATION</scope>
    <source>
        <strain>cv. Columbia</strain>
    </source>
</reference>
<reference key="3">
    <citation type="journal article" date="2006" name="Plant Biotechnol. J.">
        <title>Simultaneous high-throughput recombinational cloning of open reading frames in closed and open configurations.</title>
        <authorList>
            <person name="Underwood B.A."/>
            <person name="Vanderhaeghen R."/>
            <person name="Whitford R."/>
            <person name="Town C.D."/>
            <person name="Hilson P."/>
        </authorList>
    </citation>
    <scope>NUCLEOTIDE SEQUENCE [LARGE SCALE MRNA]</scope>
    <source>
        <strain>cv. Columbia</strain>
    </source>
</reference>
<reference key="4">
    <citation type="journal article" date="2006" name="J. Exp. Bot.">
        <title>Mutant identification and characterization of the laccase gene family in Arabidopsis.</title>
        <authorList>
            <person name="Cai X."/>
            <person name="Davis E.J."/>
            <person name="Ballif J."/>
            <person name="Liang M."/>
            <person name="Bushman E."/>
            <person name="Haroldsen V."/>
            <person name="Torabinejad J."/>
            <person name="Wu Y."/>
        </authorList>
    </citation>
    <scope>TISSUE SPECIFICITY</scope>
</reference>
<protein>
    <recommendedName>
        <fullName>Laccase-14</fullName>
        <ecNumber>1.10.3.2</ecNumber>
    </recommendedName>
    <alternativeName>
        <fullName>Benzenediol:oxygen oxidoreductase 14</fullName>
    </alternativeName>
    <alternativeName>
        <fullName>Diphenol oxidase 14</fullName>
    </alternativeName>
    <alternativeName>
        <fullName>Urishiol oxidase 14</fullName>
    </alternativeName>
</protein>
<comment type="function">
    <text evidence="1">Lignin degradation and detoxification of lignin-derived products.</text>
</comment>
<comment type="catalytic activity">
    <reaction>
        <text>4 hydroquinone + O2 = 4 benzosemiquinone + 2 H2O</text>
        <dbReference type="Rhea" id="RHEA:11276"/>
        <dbReference type="ChEBI" id="CHEBI:15377"/>
        <dbReference type="ChEBI" id="CHEBI:15379"/>
        <dbReference type="ChEBI" id="CHEBI:17594"/>
        <dbReference type="ChEBI" id="CHEBI:17977"/>
        <dbReference type="EC" id="1.10.3.2"/>
    </reaction>
</comment>
<comment type="cofactor">
    <cofactor evidence="1">
        <name>Cu cation</name>
        <dbReference type="ChEBI" id="CHEBI:23378"/>
    </cofactor>
    <text evidence="1">Binds 4 Cu cations per monomer.</text>
</comment>
<comment type="subcellular location">
    <subcellularLocation>
        <location evidence="4">Secreted</location>
        <location evidence="4">Extracellular space</location>
        <location evidence="4">Apoplast</location>
    </subcellularLocation>
</comment>
<comment type="tissue specificity">
    <text evidence="3">Expressed at low levels in flowers and siliques.</text>
</comment>
<comment type="similarity">
    <text evidence="4">Belongs to the multicopper oxidase family.</text>
</comment>